<organism>
    <name type="scientific">Danio rerio</name>
    <name type="common">Zebrafish</name>
    <name type="synonym">Brachydanio rerio</name>
    <dbReference type="NCBI Taxonomy" id="7955"/>
    <lineage>
        <taxon>Eukaryota</taxon>
        <taxon>Metazoa</taxon>
        <taxon>Chordata</taxon>
        <taxon>Craniata</taxon>
        <taxon>Vertebrata</taxon>
        <taxon>Euteleostomi</taxon>
        <taxon>Actinopterygii</taxon>
        <taxon>Neopterygii</taxon>
        <taxon>Teleostei</taxon>
        <taxon>Ostariophysi</taxon>
        <taxon>Cypriniformes</taxon>
        <taxon>Danionidae</taxon>
        <taxon>Danioninae</taxon>
        <taxon>Danio</taxon>
    </lineage>
</organism>
<reference key="1">
    <citation type="submission" date="2003-01" db="EMBL/GenBank/DDBJ databases">
        <authorList>
            <consortium name="NIH - Zebrafish Gene Collection (ZGC) project"/>
        </authorList>
    </citation>
    <scope>NUCLEOTIDE SEQUENCE [LARGE SCALE MRNA]</scope>
</reference>
<accession>Q7ZVE0</accession>
<name>GAR1_DANRE</name>
<feature type="chain" id="PRO_0000208555" description="H/ACA ribonucleoprotein complex subunit 1">
    <location>
        <begin position="1"/>
        <end position="226"/>
    </location>
</feature>
<feature type="region of interest" description="Disordered" evidence="3">
    <location>
        <begin position="1"/>
        <end position="30"/>
    </location>
</feature>
<feature type="region of interest" description="RGG-box 1">
    <location>
        <begin position="4"/>
        <end position="51"/>
    </location>
</feature>
<feature type="region of interest" description="Disordered" evidence="3">
    <location>
        <begin position="150"/>
        <end position="226"/>
    </location>
</feature>
<feature type="region of interest" description="RGG-box 2">
    <location>
        <begin position="163"/>
        <end position="226"/>
    </location>
</feature>
<feature type="compositionally biased region" description="Gly residues" evidence="3">
    <location>
        <begin position="162"/>
        <end position="226"/>
    </location>
</feature>
<keyword id="KW-0539">Nucleus</keyword>
<keyword id="KW-1185">Reference proteome</keyword>
<keyword id="KW-0677">Repeat</keyword>
<keyword id="KW-0687">Ribonucleoprotein</keyword>
<keyword id="KW-0690">Ribosome biogenesis</keyword>
<keyword id="KW-0694">RNA-binding</keyword>
<keyword id="KW-0698">rRNA processing</keyword>
<evidence type="ECO:0000250" key="1"/>
<evidence type="ECO:0000250" key="2">
    <source>
        <dbReference type="UniProtKB" id="Q9NY12"/>
    </source>
</evidence>
<evidence type="ECO:0000256" key="3">
    <source>
        <dbReference type="SAM" id="MobiDB-lite"/>
    </source>
</evidence>
<evidence type="ECO:0000305" key="4"/>
<proteinExistence type="evidence at transcript level"/>
<dbReference type="EMBL" id="BC045900">
    <property type="protein sequence ID" value="AAH45900.1"/>
    <property type="molecule type" value="mRNA"/>
</dbReference>
<dbReference type="SMR" id="Q7ZVE0"/>
<dbReference type="FunCoup" id="Q7ZVE0">
    <property type="interactions" value="136"/>
</dbReference>
<dbReference type="STRING" id="7955.ENSDARP00000101401"/>
<dbReference type="PaxDb" id="7955-ENSDARP00000101401"/>
<dbReference type="AGR" id="ZFIN:ZDB-GENE-040426-893"/>
<dbReference type="ZFIN" id="ZDB-GENE-040426-893">
    <property type="gene designation" value="gar1"/>
</dbReference>
<dbReference type="eggNOG" id="KOG3262">
    <property type="taxonomic scope" value="Eukaryota"/>
</dbReference>
<dbReference type="InParanoid" id="Q7ZVE0"/>
<dbReference type="PRO" id="PR:Q7ZVE0"/>
<dbReference type="Proteomes" id="UP000000437">
    <property type="component" value="Unplaced"/>
</dbReference>
<dbReference type="GO" id="GO:0031429">
    <property type="term" value="C:box H/ACA snoRNP complex"/>
    <property type="evidence" value="ECO:0000318"/>
    <property type="project" value="GO_Central"/>
</dbReference>
<dbReference type="GO" id="GO:0005697">
    <property type="term" value="C:telomerase holoenzyme complex"/>
    <property type="evidence" value="ECO:0000250"/>
    <property type="project" value="UniProtKB"/>
</dbReference>
<dbReference type="GO" id="GO:0034513">
    <property type="term" value="F:box H/ACA snoRNA binding"/>
    <property type="evidence" value="ECO:0000318"/>
    <property type="project" value="GO_Central"/>
</dbReference>
<dbReference type="GO" id="GO:0060216">
    <property type="term" value="P:definitive hemopoiesis"/>
    <property type="evidence" value="ECO:0000315"/>
    <property type="project" value="ZFIN"/>
</dbReference>
<dbReference type="GO" id="GO:0006364">
    <property type="term" value="P:rRNA processing"/>
    <property type="evidence" value="ECO:0000315"/>
    <property type="project" value="ZFIN"/>
</dbReference>
<dbReference type="GO" id="GO:0000454">
    <property type="term" value="P:snoRNA guided rRNA pseudouridine synthesis"/>
    <property type="evidence" value="ECO:0000318"/>
    <property type="project" value="GO_Central"/>
</dbReference>
<dbReference type="GO" id="GO:0007004">
    <property type="term" value="P:telomere maintenance via telomerase"/>
    <property type="evidence" value="ECO:0000250"/>
    <property type="project" value="UniProtKB"/>
</dbReference>
<dbReference type="FunFam" id="2.40.10.230:FF:000001">
    <property type="entry name" value="H/ACA ribonucleoprotein complex subunit"/>
    <property type="match status" value="1"/>
</dbReference>
<dbReference type="Gene3D" id="2.40.10.230">
    <property type="entry name" value="Probable tRNA pseudouridine synthase domain"/>
    <property type="match status" value="1"/>
</dbReference>
<dbReference type="InterPro" id="IPR038664">
    <property type="entry name" value="Gar1/Naf1_Cbf5-bd_sf"/>
</dbReference>
<dbReference type="InterPro" id="IPR007504">
    <property type="entry name" value="H/ACA_rnp_Gar1/Naf1"/>
</dbReference>
<dbReference type="InterPro" id="IPR009000">
    <property type="entry name" value="Transl_B-barrel_sf"/>
</dbReference>
<dbReference type="PANTHER" id="PTHR23237:SF6">
    <property type="entry name" value="H_ACA RIBONUCLEOPROTEIN COMPLEX SUBUNIT 1"/>
    <property type="match status" value="1"/>
</dbReference>
<dbReference type="PANTHER" id="PTHR23237">
    <property type="entry name" value="NUCLEOLAR PROTEIN FAMILY A MEMBER 1 SNORNP PROTEIN GAR1"/>
    <property type="match status" value="1"/>
</dbReference>
<dbReference type="Pfam" id="PF04410">
    <property type="entry name" value="Gar1"/>
    <property type="match status" value="1"/>
</dbReference>
<dbReference type="SUPFAM" id="SSF50447">
    <property type="entry name" value="Translation proteins"/>
    <property type="match status" value="1"/>
</dbReference>
<protein>
    <recommendedName>
        <fullName>H/ACA ribonucleoprotein complex subunit 1</fullName>
    </recommendedName>
    <alternativeName>
        <fullName>Nucleolar protein family A member 1</fullName>
    </alternativeName>
    <alternativeName>
        <fullName>snoRNP protein GAR1</fullName>
    </alternativeName>
</protein>
<comment type="function">
    <text evidence="1">Required for ribosome biogenesis. Part of a complex which catalyzes pseudouridylation of rRNA. This involves the isomerization of uridine such that the ribose is subsequently attached to C5, instead of the normal N1. Pseudouridine ('psi') residues may serve to stabilize the conformation of rRNAs (By similarity).</text>
</comment>
<comment type="subunit">
    <text evidence="2">Component of the small nucleolar ribonucleoprotein particle containing H/ACA-type snoRNAs (H/ACA snoRNPs) (By similarity). Component of the telomerase holoenzyme complex (By similarity).</text>
</comment>
<comment type="subcellular location">
    <subcellularLocation>
        <location evidence="1">Nucleus</location>
        <location evidence="1">Nucleolus</location>
    </subcellularLocation>
</comment>
<comment type="similarity">
    <text evidence="4">Belongs to the GAR1 family.</text>
</comment>
<gene>
    <name type="primary">gar1</name>
    <name type="synonym">nola1</name>
    <name type="ORF">zgc:56086</name>
</gene>
<sequence length="226" mass="22813">MSFRGGGGGRGGGFNRGGGGGRGGGFGGGRGGGFGGGRGGGFGGGRGGRGGFNRNQDYGPPEYVVALGEFMHPCEDEIVCKCVTEENKVPYFNAPVYLENKEQIGKVDEIFGQLRDFYFSVKLSDNMKASSFKKLQKFYIDPMKLLPLQRFLPRPPGEKGPPRGGRGGGGGRGGRGGGFRGGRGANGGGRGGFGGRGGGFGGRGGGGGGFRGGRGGGGGRGFRGGR</sequence>